<reference key="1">
    <citation type="journal article" date="2003" name="Nature">
        <title>Unique physiological and pathogenic features of Leptospira interrogans revealed by whole-genome sequencing.</title>
        <authorList>
            <person name="Ren S.-X."/>
            <person name="Fu G."/>
            <person name="Jiang X.-G."/>
            <person name="Zeng R."/>
            <person name="Miao Y.-G."/>
            <person name="Xu H."/>
            <person name="Zhang Y.-X."/>
            <person name="Xiong H."/>
            <person name="Lu G."/>
            <person name="Lu L.-F."/>
            <person name="Jiang H.-Q."/>
            <person name="Jia J."/>
            <person name="Tu Y.-F."/>
            <person name="Jiang J.-X."/>
            <person name="Gu W.-Y."/>
            <person name="Zhang Y.-Q."/>
            <person name="Cai Z."/>
            <person name="Sheng H.-H."/>
            <person name="Yin H.-F."/>
            <person name="Zhang Y."/>
            <person name="Zhu G.-F."/>
            <person name="Wan M."/>
            <person name="Huang H.-L."/>
            <person name="Qian Z."/>
            <person name="Wang S.-Y."/>
            <person name="Ma W."/>
            <person name="Yao Z.-J."/>
            <person name="Shen Y."/>
            <person name="Qiang B.-Q."/>
            <person name="Xia Q.-C."/>
            <person name="Guo X.-K."/>
            <person name="Danchin A."/>
            <person name="Saint Girons I."/>
            <person name="Somerville R.L."/>
            <person name="Wen Y.-M."/>
            <person name="Shi M.-H."/>
            <person name="Chen Z."/>
            <person name="Xu J.-G."/>
            <person name="Zhao G.-P."/>
        </authorList>
    </citation>
    <scope>NUCLEOTIDE SEQUENCE [LARGE SCALE GENOMIC DNA]</scope>
    <source>
        <strain>56601</strain>
    </source>
</reference>
<name>CLPB_LEPIN</name>
<comment type="function">
    <text evidence="1">Part of a stress-induced multi-chaperone system, it is involved in the recovery of the cell from heat-induced damage, in cooperation with DnaK, DnaJ and GrpE. Acts before DnaK, in the processing of protein aggregates. Protein binding stimulates the ATPase activity; ATP hydrolysis unfolds the denatured protein aggregates, which probably helps expose new hydrophobic binding sites on the surface of ClpB-bound aggregates, contributing to the solubilization and refolding of denatured protein aggregates by DnaK (By similarity).</text>
</comment>
<comment type="subunit">
    <text evidence="1">Homohexamer. The oligomerization is ATP-dependent (By similarity).</text>
</comment>
<comment type="subcellular location">
    <subcellularLocation>
        <location evidence="3">Cytoplasm</location>
    </subcellularLocation>
</comment>
<comment type="domain">
    <text evidence="1">The Clp repeat (R) domain probably functions as a substrate-discriminating domain, recruiting aggregated proteins to the ClpB hexamer and/or stabilizing bound proteins. The NBD2 domain is responsible for oligomerization, whereas the NBD1 domain stabilizes the hexamer probably in an ATP-dependent manner. The movement of the coiled-coil domain is essential for ClpB ability to rescue proteins from an aggregated state, probably by pulling apart large aggregated proteins, which are bound between the coiled-coils motifs of adjacent ClpB subunits in the functional hexamer (By similarity).</text>
</comment>
<comment type="similarity">
    <text evidence="3">Belongs to the ClpA/ClpB family.</text>
</comment>
<accession>Q8F509</accession>
<feature type="chain" id="PRO_0000191134" description="Chaperone protein ClpB">
    <location>
        <begin position="1"/>
        <end position="860"/>
    </location>
</feature>
<feature type="domain" description="Clp R" evidence="2">
    <location>
        <begin position="3"/>
        <end position="148"/>
    </location>
</feature>
<feature type="region of interest" description="Repeat 1" evidence="2">
    <location>
        <begin position="6"/>
        <end position="71"/>
    </location>
</feature>
<feature type="region of interest" description="Repeat 2" evidence="2">
    <location>
        <begin position="84"/>
        <end position="148"/>
    </location>
</feature>
<feature type="region of interest" description="NBD1" evidence="1">
    <location>
        <begin position="161"/>
        <end position="342"/>
    </location>
</feature>
<feature type="region of interest" description="Linker" evidence="1">
    <location>
        <begin position="343"/>
        <end position="550"/>
    </location>
</feature>
<feature type="region of interest" description="NBD2" evidence="1">
    <location>
        <begin position="560"/>
        <end position="768"/>
    </location>
</feature>
<feature type="region of interest" description="C-terminal" evidence="1">
    <location>
        <begin position="769"/>
        <end position="860"/>
    </location>
</feature>
<feature type="coiled-coil region" evidence="1">
    <location>
        <begin position="393"/>
        <end position="527"/>
    </location>
</feature>
<feature type="binding site" evidence="1">
    <location>
        <begin position="208"/>
        <end position="215"/>
    </location>
    <ligand>
        <name>ATP</name>
        <dbReference type="ChEBI" id="CHEBI:30616"/>
        <label>1</label>
    </ligand>
</feature>
<feature type="binding site" evidence="1">
    <location>
        <begin position="610"/>
        <end position="617"/>
    </location>
    <ligand>
        <name>ATP</name>
        <dbReference type="ChEBI" id="CHEBI:30616"/>
        <label>2</label>
    </ligand>
</feature>
<organism>
    <name type="scientific">Leptospira interrogans serogroup Icterohaemorrhagiae serovar Lai (strain 56601)</name>
    <dbReference type="NCBI Taxonomy" id="189518"/>
    <lineage>
        <taxon>Bacteria</taxon>
        <taxon>Pseudomonadati</taxon>
        <taxon>Spirochaetota</taxon>
        <taxon>Spirochaetia</taxon>
        <taxon>Leptospirales</taxon>
        <taxon>Leptospiraceae</taxon>
        <taxon>Leptospira</taxon>
    </lineage>
</organism>
<gene>
    <name type="primary">clpB</name>
    <name type="ordered locus">LA_1879</name>
</gene>
<evidence type="ECO:0000250" key="1"/>
<evidence type="ECO:0000255" key="2">
    <source>
        <dbReference type="PROSITE-ProRule" id="PRU01251"/>
    </source>
</evidence>
<evidence type="ECO:0000305" key="3"/>
<sequence length="860" mass="96311">MKLDKLTSKLNEAIYNAQASAEKLGNPEISEEHILKEVLSQPDGLVPLLISKLNLSPKSFLESTENALGKQPKVGGNTSADVGFSRSAVSLLKAADEVRKELKDEYLSTDHILLGLMKNGTGSLKTEFLKLGLEYHKLLKITLENRKGKTIMDDSPEGKTDALAKYAKNLNELAKQGKLDPVIGRDEEIRRTIQVLSRRTKNNPVLIGEPGVGKTAIVEGLANKIVQGEVPEGIKNKTLYTLDLGSMIAGAKYRGEFEDRLKALLDEVKSSDGEVILFIDEIHTLVGAGATEGALDASNMLKPMLARGELRCIGATTLKEYQKYIEKDAALERRFQPVYVKEPSVEETVTILRGLKGRYELHHGIRILDSALIAAATLSNRYISDRFLPDKAVDLIDEASSKMRIEIDSMPEELDRANKRIQSLKIEREALKKEQDTASKERLKTLERDLSEQEQNFQTLKARWDLEKSKIGRLKQIKEEIEKYKNLEAEAERRGEINRVAEIRYGKLVDLQKELESANEELKKQESASRLLKEEVSEEDIANIVSRWTGIPVSKMLQGERAKLLLMEDVLKTKVIGQDHALRLVSEAVQRSRAGIADPNRPIGTFLFLGPTGVGKTETAKALAEFLFDDVNAMTRIDMSEYMEAHSVARLIGAPPGYVGYDEGGQLTEAVRRRPYSLILFDEIEKANPEVFNIFLQILDEGRLTDGKGRNVDFKNTVIILTSNIGSEVLGSSEYTSEEKERLVEQRLKKHFKPEFLNRIDEVILFHSITDSVIHKIADIQLEGLRQKAKENGLDVSFTNELKDYVSKAGFDAEYGARPLKRLIQREVGNALSRYILDGKFTNGQNVTVDYRQGKVVVVV</sequence>
<proteinExistence type="inferred from homology"/>
<keyword id="KW-0067">ATP-binding</keyword>
<keyword id="KW-0143">Chaperone</keyword>
<keyword id="KW-0175">Coiled coil</keyword>
<keyword id="KW-0963">Cytoplasm</keyword>
<keyword id="KW-0547">Nucleotide-binding</keyword>
<keyword id="KW-1185">Reference proteome</keyword>
<keyword id="KW-0677">Repeat</keyword>
<keyword id="KW-0346">Stress response</keyword>
<protein>
    <recommendedName>
        <fullName>Chaperone protein ClpB</fullName>
    </recommendedName>
</protein>
<dbReference type="EMBL" id="AE010300">
    <property type="protein sequence ID" value="AAN49078.1"/>
    <property type="molecule type" value="Genomic_DNA"/>
</dbReference>
<dbReference type="RefSeq" id="NP_712060.1">
    <property type="nucleotide sequence ID" value="NC_004342.2"/>
</dbReference>
<dbReference type="RefSeq" id="WP_000762672.1">
    <property type="nucleotide sequence ID" value="NC_004342.2"/>
</dbReference>
<dbReference type="SMR" id="Q8F509"/>
<dbReference type="FunCoup" id="Q8F509">
    <property type="interactions" value="459"/>
</dbReference>
<dbReference type="STRING" id="189518.LA_1879"/>
<dbReference type="PaxDb" id="189518-LA_1879"/>
<dbReference type="EnsemblBacteria" id="AAN49078">
    <property type="protein sequence ID" value="AAN49078"/>
    <property type="gene ID" value="LA_1879"/>
</dbReference>
<dbReference type="KEGG" id="lil:LA_1879"/>
<dbReference type="PATRIC" id="fig|189518.3.peg.1871"/>
<dbReference type="HOGENOM" id="CLU_005070_4_0_12"/>
<dbReference type="InParanoid" id="Q8F509"/>
<dbReference type="OrthoDB" id="9803641at2"/>
<dbReference type="Proteomes" id="UP000001408">
    <property type="component" value="Chromosome I"/>
</dbReference>
<dbReference type="GO" id="GO:0005737">
    <property type="term" value="C:cytoplasm"/>
    <property type="evidence" value="ECO:0000318"/>
    <property type="project" value="GO_Central"/>
</dbReference>
<dbReference type="GO" id="GO:0005524">
    <property type="term" value="F:ATP binding"/>
    <property type="evidence" value="ECO:0007669"/>
    <property type="project" value="UniProtKB-KW"/>
</dbReference>
<dbReference type="GO" id="GO:0016887">
    <property type="term" value="F:ATP hydrolysis activity"/>
    <property type="evidence" value="ECO:0000318"/>
    <property type="project" value="GO_Central"/>
</dbReference>
<dbReference type="GO" id="GO:0034605">
    <property type="term" value="P:cellular response to heat"/>
    <property type="evidence" value="ECO:0000318"/>
    <property type="project" value="GO_Central"/>
</dbReference>
<dbReference type="GO" id="GO:0042026">
    <property type="term" value="P:protein refolding"/>
    <property type="evidence" value="ECO:0007669"/>
    <property type="project" value="InterPro"/>
</dbReference>
<dbReference type="CDD" id="cd00009">
    <property type="entry name" value="AAA"/>
    <property type="match status" value="1"/>
</dbReference>
<dbReference type="CDD" id="cd19499">
    <property type="entry name" value="RecA-like_ClpB_Hsp104-like"/>
    <property type="match status" value="1"/>
</dbReference>
<dbReference type="FunFam" id="3.40.50.300:FF:000120">
    <property type="entry name" value="ATP-dependent chaperone ClpB"/>
    <property type="match status" value="1"/>
</dbReference>
<dbReference type="FunFam" id="3.40.50.300:FF:000025">
    <property type="entry name" value="ATP-dependent Clp protease subunit"/>
    <property type="match status" value="1"/>
</dbReference>
<dbReference type="FunFam" id="3.40.50.300:FF:000010">
    <property type="entry name" value="Chaperone clpB 1, putative"/>
    <property type="match status" value="1"/>
</dbReference>
<dbReference type="Gene3D" id="1.10.8.60">
    <property type="match status" value="1"/>
</dbReference>
<dbReference type="Gene3D" id="1.10.1780.10">
    <property type="entry name" value="Clp, N-terminal domain"/>
    <property type="match status" value="1"/>
</dbReference>
<dbReference type="Gene3D" id="3.40.50.300">
    <property type="entry name" value="P-loop containing nucleotide triphosphate hydrolases"/>
    <property type="match status" value="3"/>
</dbReference>
<dbReference type="InterPro" id="IPR003593">
    <property type="entry name" value="AAA+_ATPase"/>
</dbReference>
<dbReference type="InterPro" id="IPR003959">
    <property type="entry name" value="ATPase_AAA_core"/>
</dbReference>
<dbReference type="InterPro" id="IPR017730">
    <property type="entry name" value="Chaperonin_ClpB"/>
</dbReference>
<dbReference type="InterPro" id="IPR019489">
    <property type="entry name" value="Clp_ATPase_C"/>
</dbReference>
<dbReference type="InterPro" id="IPR036628">
    <property type="entry name" value="Clp_N_dom_sf"/>
</dbReference>
<dbReference type="InterPro" id="IPR004176">
    <property type="entry name" value="Clp_R_dom"/>
</dbReference>
<dbReference type="InterPro" id="IPR001270">
    <property type="entry name" value="ClpA/B"/>
</dbReference>
<dbReference type="InterPro" id="IPR018368">
    <property type="entry name" value="ClpA/B_CS1"/>
</dbReference>
<dbReference type="InterPro" id="IPR028299">
    <property type="entry name" value="ClpA/B_CS2"/>
</dbReference>
<dbReference type="InterPro" id="IPR041546">
    <property type="entry name" value="ClpA/ClpB_AAA_lid"/>
</dbReference>
<dbReference type="InterPro" id="IPR050130">
    <property type="entry name" value="ClpA_ClpB"/>
</dbReference>
<dbReference type="InterPro" id="IPR027417">
    <property type="entry name" value="P-loop_NTPase"/>
</dbReference>
<dbReference type="NCBIfam" id="TIGR03346">
    <property type="entry name" value="chaperone_ClpB"/>
    <property type="match status" value="1"/>
</dbReference>
<dbReference type="PANTHER" id="PTHR11638">
    <property type="entry name" value="ATP-DEPENDENT CLP PROTEASE"/>
    <property type="match status" value="1"/>
</dbReference>
<dbReference type="PANTHER" id="PTHR11638:SF18">
    <property type="entry name" value="HEAT SHOCK PROTEIN 104"/>
    <property type="match status" value="1"/>
</dbReference>
<dbReference type="Pfam" id="PF00004">
    <property type="entry name" value="AAA"/>
    <property type="match status" value="1"/>
</dbReference>
<dbReference type="Pfam" id="PF07724">
    <property type="entry name" value="AAA_2"/>
    <property type="match status" value="1"/>
</dbReference>
<dbReference type="Pfam" id="PF17871">
    <property type="entry name" value="AAA_lid_9"/>
    <property type="match status" value="1"/>
</dbReference>
<dbReference type="Pfam" id="PF02861">
    <property type="entry name" value="Clp_N"/>
    <property type="match status" value="2"/>
</dbReference>
<dbReference type="Pfam" id="PF10431">
    <property type="entry name" value="ClpB_D2-small"/>
    <property type="match status" value="1"/>
</dbReference>
<dbReference type="PRINTS" id="PR00300">
    <property type="entry name" value="CLPPROTEASEA"/>
</dbReference>
<dbReference type="SMART" id="SM00382">
    <property type="entry name" value="AAA"/>
    <property type="match status" value="2"/>
</dbReference>
<dbReference type="SMART" id="SM01086">
    <property type="entry name" value="ClpB_D2-small"/>
    <property type="match status" value="1"/>
</dbReference>
<dbReference type="SUPFAM" id="SSF81923">
    <property type="entry name" value="Double Clp-N motif"/>
    <property type="match status" value="1"/>
</dbReference>
<dbReference type="SUPFAM" id="SSF52540">
    <property type="entry name" value="P-loop containing nucleoside triphosphate hydrolases"/>
    <property type="match status" value="2"/>
</dbReference>
<dbReference type="PROSITE" id="PS51903">
    <property type="entry name" value="CLP_R"/>
    <property type="match status" value="1"/>
</dbReference>
<dbReference type="PROSITE" id="PS00870">
    <property type="entry name" value="CLPAB_1"/>
    <property type="match status" value="1"/>
</dbReference>
<dbReference type="PROSITE" id="PS00871">
    <property type="entry name" value="CLPAB_2"/>
    <property type="match status" value="1"/>
</dbReference>